<reference key="1">
    <citation type="journal article" date="1985" name="Infect. Immun.">
        <title>Nucleotide sequence comparison between heat-labile toxin B-subunit cistrons from Escherichia coli of human and porcine origin.</title>
        <authorList>
            <person name="Leong J."/>
            <person name="Vinal A.C."/>
            <person name="Dallas W.S."/>
        </authorList>
    </citation>
    <scope>NUCLEOTIDE SEQUENCE [GENOMIC DNA]</scope>
    <source>
        <strain>Isolate H74-114</strain>
    </source>
</reference>
<reference key="2">
    <citation type="submission" date="1996-10" db="EMBL/GenBank/DDBJ databases">
        <authorList>
            <person name="Germani Y."/>
            <person name="Desperrier J.-M."/>
        </authorList>
    </citation>
    <scope>NUCLEOTIDE SEQUENCE [GENOMIC DNA]</scope>
    <source>
        <strain>ETEC LT 87</strain>
    </source>
</reference>
<reference key="3">
    <citation type="journal article" date="1987" name="Microb. Pathog.">
        <title>A unique amino acid sequence of the B subunit of a heat-labile enterotoxin isolated from a human enterotoxigenic Escherichia coli.</title>
        <authorList>
            <person name="Tsuji T."/>
            <person name="Iida T."/>
            <person name="Honda T."/>
            <person name="Miwatani T."/>
            <person name="Nagahama M."/>
            <person name="Sakurai J."/>
            <person name="Wada K."/>
            <person name="Matsubara H."/>
        </authorList>
    </citation>
    <scope>PROTEIN SEQUENCE OF 22-124</scope>
    <source>
        <strain>Isolate 240-3</strain>
    </source>
</reference>
<reference key="4">
    <citation type="journal article" date="1995" name="Mol. Microbiol.">
        <title>Identification of errors among database sequence entries and comparison of correct amino acid sequences for the heat-labile enterotoxins of Escherichia coli and Vibrio cholerae.</title>
        <authorList>
            <person name="Domenighini M."/>
            <person name="Pizza M."/>
            <person name="Jobling M.G."/>
            <person name="Holmes R.K."/>
            <person name="Rappuoli R."/>
        </authorList>
    </citation>
    <scope>DISCUSSION OF SEQUENCE</scope>
</reference>
<reference key="5">
    <citation type="journal article" date="1999" name="J. Biol. Chem.">
        <title>Crystal structure of the B subunit of Escherichia coli heat-labile enterotoxin carrying peptides with anti-herpes simplex virus type 1 activity.</title>
        <authorList>
            <person name="Matkovic-Calogovic D."/>
            <person name="Loregian A."/>
            <person name="D'Acunto M.R."/>
            <person name="Battistutta R."/>
            <person name="Tossi A."/>
            <person name="Palu G."/>
            <person name="Zanotti G."/>
        </authorList>
    </citation>
    <scope>X-RAY CRYSTALLOGRAPHY (3.04 ANGSTROMS)</scope>
</reference>
<organism>
    <name type="scientific">Escherichia coli</name>
    <dbReference type="NCBI Taxonomy" id="562"/>
    <lineage>
        <taxon>Bacteria</taxon>
        <taxon>Pseudomonadati</taxon>
        <taxon>Pseudomonadota</taxon>
        <taxon>Gammaproteobacteria</taxon>
        <taxon>Enterobacterales</taxon>
        <taxon>Enterobacteriaceae</taxon>
        <taxon>Escherichia</taxon>
    </lineage>
</organism>
<evidence type="ECO:0000269" key="1">
    <source>
    </source>
</evidence>
<evidence type="ECO:0007829" key="2">
    <source>
        <dbReference type="PDB" id="1LTR"/>
    </source>
</evidence>
<evidence type="ECO:0007829" key="3">
    <source>
        <dbReference type="PDB" id="2O2L"/>
    </source>
</evidence>
<evidence type="ECO:0007829" key="4">
    <source>
        <dbReference type="PDB" id="3EFX"/>
    </source>
</evidence>
<name>ELBH_ECOLX</name>
<keyword id="KW-0002">3D-structure</keyword>
<keyword id="KW-0903">Direct protein sequencing</keyword>
<keyword id="KW-1015">Disulfide bond</keyword>
<keyword id="KW-0260">Enterotoxin</keyword>
<keyword id="KW-0732">Signal</keyword>
<keyword id="KW-0800">Toxin</keyword>
<keyword id="KW-0843">Virulence</keyword>
<sequence>MNKVKFYVLFTALLSSLCAHGAPQSITELCSEYHNTQIYTINDKILSYTESMAGKREMVIITFKSGATFQVEVPGSQHIDSQKKAIERMKDTLRITYLTETKIDKLCVWNNKTPNSIAAISMEN</sequence>
<comment type="function">
    <text>The biological activity of the toxin is produced by the A chain, which activates intracellular adenyl cyclase.</text>
</comment>
<comment type="subunit">
    <text>Heterohexamer of one A chain and of five B chains.</text>
</comment>
<feature type="signal peptide" evidence="1">
    <location>
        <begin position="1"/>
        <end position="21"/>
    </location>
</feature>
<feature type="chain" id="PRO_0000019356" description="Heat-labile enterotoxin B chain">
    <location>
        <begin position="22"/>
        <end position="124"/>
    </location>
</feature>
<feature type="disulfide bond">
    <location>
        <begin position="30"/>
        <end position="107"/>
    </location>
</feature>
<feature type="sequence variant" description="In strain: Isolate 240-3.">
    <original>H</original>
    <variation>R</variation>
    <location>
        <position position="34"/>
    </location>
</feature>
<feature type="sequence variant" description="In strain: Isolate 240-3.">
    <original>T</original>
    <variation>A</variation>
    <location>
        <position position="96"/>
    </location>
</feature>
<feature type="helix" evidence="4">
    <location>
        <begin position="28"/>
        <end position="31"/>
    </location>
</feature>
<feature type="strand" evidence="4">
    <location>
        <begin position="36"/>
        <end position="43"/>
    </location>
</feature>
<feature type="strand" evidence="4">
    <location>
        <begin position="46"/>
        <end position="51"/>
    </location>
</feature>
<feature type="strand" evidence="3">
    <location>
        <begin position="59"/>
        <end position="62"/>
    </location>
</feature>
<feature type="strand" evidence="4">
    <location>
        <begin position="68"/>
        <end position="71"/>
    </location>
</feature>
<feature type="helix" evidence="4">
    <location>
        <begin position="83"/>
        <end position="95"/>
    </location>
</feature>
<feature type="strand" evidence="2">
    <location>
        <begin position="102"/>
        <end position="109"/>
    </location>
</feature>
<feature type="strand" evidence="4">
    <location>
        <begin position="115"/>
        <end position="122"/>
    </location>
</feature>
<protein>
    <recommendedName>
        <fullName>Heat-labile enterotoxin B chain</fullName>
    </recommendedName>
    <alternativeName>
        <fullName>LT-B, human</fullName>
    </alternativeName>
    <alternativeName>
        <fullName>LTH-B</fullName>
    </alternativeName>
</protein>
<dbReference type="EMBL" id="M17874">
    <property type="protein sequence ID" value="AAA98064.1"/>
    <property type="molecule type" value="Genomic_DNA"/>
</dbReference>
<dbReference type="EMBL" id="X83966">
    <property type="protein sequence ID" value="CAA58800.1"/>
    <property type="molecule type" value="Genomic_DNA"/>
</dbReference>
<dbReference type="PIR" id="A01820">
    <property type="entry name" value="QLECB"/>
</dbReference>
<dbReference type="RefSeq" id="WP_024167713.1">
    <property type="nucleotide sequence ID" value="NZ_NLYI01000164.1"/>
</dbReference>
<dbReference type="PDB" id="1B44">
    <property type="method" value="X-ray"/>
    <property type="resolution" value="3.30 A"/>
    <property type="chains" value="D/E/F/G/H=22-123"/>
</dbReference>
<dbReference type="PDB" id="1LTR">
    <property type="method" value="X-ray"/>
    <property type="resolution" value="3.04 A"/>
    <property type="chains" value="D/E/F/G/H=22-123"/>
</dbReference>
<dbReference type="PDB" id="2O2L">
    <property type="method" value="X-ray"/>
    <property type="resolution" value="2.53 A"/>
    <property type="chains" value="D/E/F/G/H/I/J/K/L/M=22-124"/>
</dbReference>
<dbReference type="PDB" id="3EFX">
    <property type="method" value="X-ray"/>
    <property type="resolution" value="1.94 A"/>
    <property type="chains" value="D/E/F/G/H/I/J/K/L/M=26-122"/>
</dbReference>
<dbReference type="PDBsum" id="1B44"/>
<dbReference type="PDBsum" id="1LTR"/>
<dbReference type="PDBsum" id="2O2L"/>
<dbReference type="PDBsum" id="3EFX"/>
<dbReference type="SMR" id="P0CK94"/>
<dbReference type="UniLectin" id="P0CK94"/>
<dbReference type="EvolutionaryTrace" id="P0CK94"/>
<dbReference type="GO" id="GO:0005576">
    <property type="term" value="C:extracellular region"/>
    <property type="evidence" value="ECO:0007669"/>
    <property type="project" value="InterPro"/>
</dbReference>
<dbReference type="GO" id="GO:0090729">
    <property type="term" value="F:toxin activity"/>
    <property type="evidence" value="ECO:0007669"/>
    <property type="project" value="UniProtKB-KW"/>
</dbReference>
<dbReference type="Gene3D" id="2.40.50.110">
    <property type="match status" value="1"/>
</dbReference>
<dbReference type="InterPro" id="IPR008992">
    <property type="entry name" value="Enterotoxin"/>
</dbReference>
<dbReference type="InterPro" id="IPR001835">
    <property type="entry name" value="Enterotoxin_B"/>
</dbReference>
<dbReference type="Pfam" id="PF01376">
    <property type="entry name" value="Enterotoxin_b"/>
    <property type="match status" value="1"/>
</dbReference>
<dbReference type="PRINTS" id="PR00772">
    <property type="entry name" value="ENTEROTOXINB"/>
</dbReference>
<dbReference type="SUPFAM" id="SSF50203">
    <property type="entry name" value="Bacterial enterotoxins"/>
    <property type="match status" value="1"/>
</dbReference>
<accession>P0CK94</accession>
<accession>P13811</accession>
<gene>
    <name type="primary">eltB</name>
    <name type="synonym">ltpB</name>
</gene>
<proteinExistence type="evidence at protein level"/>